<proteinExistence type="evidence at transcript level"/>
<reference key="1">
    <citation type="journal article" date="1994" name="Nature">
        <title>2.2 Mb of contiguous nucleotide sequence from chromosome III of C. elegans.</title>
        <authorList>
            <person name="Wilson R."/>
            <person name="Ainscough R."/>
            <person name="Anderson K."/>
            <person name="Baynes C."/>
            <person name="Berks M."/>
            <person name="Bonfield J."/>
            <person name="Burton J."/>
            <person name="Connell M."/>
            <person name="Copsey T."/>
            <person name="Cooper J."/>
            <person name="Coulson A."/>
            <person name="Craxton M."/>
            <person name="Dear S."/>
            <person name="Du Z."/>
            <person name="Durbin R."/>
            <person name="Favello A."/>
            <person name="Fraser A."/>
            <person name="Fulton L."/>
            <person name="Gardner A."/>
            <person name="Green P."/>
            <person name="Hawkins T."/>
            <person name="Hillier L."/>
            <person name="Jier M."/>
            <person name="Johnston L."/>
            <person name="Jones M."/>
            <person name="Kershaw J."/>
            <person name="Kirsten J."/>
            <person name="Laisster N."/>
            <person name="Latreille P."/>
            <person name="Lightning J."/>
            <person name="Lloyd C."/>
            <person name="Mortimore B."/>
            <person name="O'Callaghan M."/>
            <person name="Parsons J."/>
            <person name="Percy C."/>
            <person name="Rifken L."/>
            <person name="Roopra A."/>
            <person name="Saunders D."/>
            <person name="Shownkeen R."/>
            <person name="Sims M."/>
            <person name="Smaldon N."/>
            <person name="Smith A."/>
            <person name="Smith M."/>
            <person name="Sonnhammer E."/>
            <person name="Staden R."/>
            <person name="Sulston J."/>
            <person name="Thierry-Mieg J."/>
            <person name="Thomas K."/>
            <person name="Vaudin M."/>
            <person name="Vaughan K."/>
            <person name="Waterston R."/>
            <person name="Watson A."/>
            <person name="Weinstock L."/>
            <person name="Wilkinson-Sproat J."/>
            <person name="Wohldman P."/>
        </authorList>
    </citation>
    <scope>NUCLEOTIDE SEQUENCE [LARGE SCALE GENOMIC DNA]</scope>
    <source>
        <strain>Bristol N2</strain>
    </source>
</reference>
<reference key="2">
    <citation type="journal article" date="1998" name="Science">
        <title>Genome sequence of the nematode C. elegans: a platform for investigating biology.</title>
        <authorList>
            <consortium name="The C. elegans sequencing consortium"/>
        </authorList>
    </citation>
    <scope>NUCLEOTIDE SEQUENCE [LARGE SCALE GENOMIC DNA]</scope>
    <source>
        <strain>Bristol N2</strain>
    </source>
</reference>
<reference key="3">
    <citation type="journal article" date="2013" name="PLoS Genet.">
        <title>Genetic regulation of Caenorhabditis elegans lysosome related organelle function.</title>
        <authorList>
            <person name="Soukas A.A."/>
            <person name="Carr C.E."/>
            <person name="Ruvkun G."/>
        </authorList>
    </citation>
    <scope>FUNCTION</scope>
    <scope>SUBCELLULAR LOCATION</scope>
    <scope>TISSUE SPECIFICITY</scope>
</reference>
<dbReference type="EMBL" id="Z11505">
    <property type="protein sequence ID" value="CAA77582.1"/>
    <property type="molecule type" value="Genomic_DNA"/>
</dbReference>
<dbReference type="PIR" id="F88544">
    <property type="entry name" value="F88544"/>
</dbReference>
<dbReference type="PIR" id="S31123">
    <property type="entry name" value="S31123"/>
</dbReference>
<dbReference type="RefSeq" id="NP_498989.1">
    <property type="nucleotide sequence ID" value="NM_066588.7"/>
</dbReference>
<dbReference type="BioGRID" id="41470">
    <property type="interactions" value="1"/>
</dbReference>
<dbReference type="FunCoup" id="P34479">
    <property type="interactions" value="58"/>
</dbReference>
<dbReference type="STRING" id="6239.F59B2.2.1"/>
<dbReference type="TCDB" id="2.A.18.8.8">
    <property type="family name" value="the amino acid/auxin permease (aaap) family"/>
</dbReference>
<dbReference type="iPTMnet" id="P34479"/>
<dbReference type="PaxDb" id="6239-F59B2.2"/>
<dbReference type="PeptideAtlas" id="P34479"/>
<dbReference type="EnsemblMetazoa" id="F59B2.2.1">
    <property type="protein sequence ID" value="F59B2.2.1"/>
    <property type="gene ID" value="WBGene00010307"/>
</dbReference>
<dbReference type="GeneID" id="176271"/>
<dbReference type="KEGG" id="cel:CELE_F59B2.2"/>
<dbReference type="UCSC" id="F59B2.2">
    <property type="organism name" value="c. elegans"/>
</dbReference>
<dbReference type="AGR" id="WB:WBGene00010307"/>
<dbReference type="CTD" id="176271"/>
<dbReference type="WormBase" id="F59B2.2">
    <property type="protein sequence ID" value="CE20899"/>
    <property type="gene ID" value="WBGene00010307"/>
    <property type="gene designation" value="skat-1"/>
</dbReference>
<dbReference type="eggNOG" id="KOG1304">
    <property type="taxonomic scope" value="Eukaryota"/>
</dbReference>
<dbReference type="HOGENOM" id="CLU_009646_0_1_1"/>
<dbReference type="InParanoid" id="P34479"/>
<dbReference type="OMA" id="IAMYVVF"/>
<dbReference type="OrthoDB" id="10264777at2759"/>
<dbReference type="PhylomeDB" id="P34479"/>
<dbReference type="Reactome" id="R-CEL-352230">
    <property type="pathway name" value="Amino acid transport across the plasma membrane"/>
</dbReference>
<dbReference type="Reactome" id="R-CEL-428559">
    <property type="pathway name" value="Proton-coupled neutral amino acid transporters"/>
</dbReference>
<dbReference type="Reactome" id="R-CEL-71240">
    <property type="pathway name" value="Tryptophan catabolism"/>
</dbReference>
<dbReference type="PRO" id="PR:P34479"/>
<dbReference type="Proteomes" id="UP000001940">
    <property type="component" value="Chromosome III"/>
</dbReference>
<dbReference type="Bgee" id="WBGene00010307">
    <property type="expression patterns" value="Expressed in germ line (C elegans) and 4 other cell types or tissues"/>
</dbReference>
<dbReference type="GO" id="GO:0005774">
    <property type="term" value="C:vacuolar membrane"/>
    <property type="evidence" value="ECO:0000318"/>
    <property type="project" value="GO_Central"/>
</dbReference>
<dbReference type="GO" id="GO:0015179">
    <property type="term" value="F:L-amino acid transmembrane transporter activity"/>
    <property type="evidence" value="ECO:0000318"/>
    <property type="project" value="GO_Central"/>
</dbReference>
<dbReference type="GO" id="GO:0003333">
    <property type="term" value="P:amino acid transmembrane transport"/>
    <property type="evidence" value="ECO:0000318"/>
    <property type="project" value="GO_Central"/>
</dbReference>
<dbReference type="InterPro" id="IPR013057">
    <property type="entry name" value="AA_transpt_TM"/>
</dbReference>
<dbReference type="PANTHER" id="PTHR22950">
    <property type="entry name" value="AMINO ACID TRANSPORTER"/>
    <property type="match status" value="1"/>
</dbReference>
<dbReference type="PANTHER" id="PTHR22950:SF343">
    <property type="entry name" value="AMINO ACID TRANSPORTER SKAT-1-RELATED"/>
    <property type="match status" value="1"/>
</dbReference>
<dbReference type="Pfam" id="PF01490">
    <property type="entry name" value="Aa_trans"/>
    <property type="match status" value="1"/>
</dbReference>
<feature type="chain" id="PRO_0000093831" description="Probable amino acid transporter skat-1" evidence="4">
    <location>
        <begin position="1"/>
        <end position="460"/>
    </location>
</feature>
<feature type="transmembrane region" description="Helical" evidence="1">
    <location>
        <begin position="64"/>
        <end position="84"/>
    </location>
</feature>
<feature type="transmembrane region" description="Helical" evidence="1">
    <location>
        <begin position="132"/>
        <end position="152"/>
    </location>
</feature>
<feature type="transmembrane region" description="Helical" evidence="1">
    <location>
        <begin position="172"/>
        <end position="192"/>
    </location>
</feature>
<feature type="transmembrane region" description="Helical" evidence="1">
    <location>
        <begin position="194"/>
        <end position="214"/>
    </location>
</feature>
<feature type="transmembrane region" description="Helical" evidence="1">
    <location>
        <begin position="236"/>
        <end position="256"/>
    </location>
</feature>
<feature type="transmembrane region" description="Helical" evidence="1">
    <location>
        <begin position="270"/>
        <end position="290"/>
    </location>
</feature>
<feature type="transmembrane region" description="Helical" evidence="1">
    <location>
        <begin position="316"/>
        <end position="336"/>
    </location>
</feature>
<feature type="transmembrane region" description="Helical" evidence="1">
    <location>
        <begin position="362"/>
        <end position="382"/>
    </location>
</feature>
<feature type="transmembrane region" description="Helical" evidence="1">
    <location>
        <begin position="383"/>
        <end position="403"/>
    </location>
</feature>
<feature type="transmembrane region" description="Helical" evidence="1">
    <location>
        <begin position="426"/>
        <end position="446"/>
    </location>
</feature>
<keyword id="KW-0029">Amino-acid transport</keyword>
<keyword id="KW-0472">Membrane</keyword>
<keyword id="KW-1185">Reference proteome</keyword>
<keyword id="KW-0812">Transmembrane</keyword>
<keyword id="KW-1133">Transmembrane helix</keyword>
<keyword id="KW-0813">Transport</keyword>
<accession>P34479</accession>
<accession>Q9U3E0</accession>
<name>SKAT1_CAEEL</name>
<comment type="function">
    <text evidence="2">Plays a role in the accumulation of vital dyes and endogenous fluorescent compounds in lysosome related organelles. Has an effect on lysosome related organelle (LRO) function, in a pathway with serotonin.</text>
</comment>
<comment type="subcellular location">
    <subcellularLocation>
        <location evidence="1">Membrane</location>
        <topology evidence="1">Multi-pass membrane protein</topology>
    </subcellularLocation>
    <subcellularLocation>
        <location evidence="2">Cytoplasmic granule</location>
    </subcellularLocation>
</comment>
<comment type="tissue specificity">
    <text evidence="2">Expressed in the head, tail, body and ventral nerve cord neurons, muscles of the vulva, and intestine.</text>
</comment>
<comment type="similarity">
    <text evidence="4">Belongs to the amino acid/polyamine transporter 2 family.</text>
</comment>
<evidence type="ECO:0000255" key="1"/>
<evidence type="ECO:0000269" key="2">
    <source>
    </source>
</evidence>
<evidence type="ECO:0000303" key="3">
    <source>
    </source>
</evidence>
<evidence type="ECO:0000305" key="4"/>
<evidence type="ECO:0000312" key="5">
    <source>
        <dbReference type="WormBase" id="F59B2.2"/>
    </source>
</evidence>
<organism>
    <name type="scientific">Caenorhabditis elegans</name>
    <dbReference type="NCBI Taxonomy" id="6239"/>
    <lineage>
        <taxon>Eukaryota</taxon>
        <taxon>Metazoa</taxon>
        <taxon>Ecdysozoa</taxon>
        <taxon>Nematoda</taxon>
        <taxon>Chromadorea</taxon>
        <taxon>Rhabditida</taxon>
        <taxon>Rhabditina</taxon>
        <taxon>Rhabditomorpha</taxon>
        <taxon>Rhabditoidea</taxon>
        <taxon>Rhabditidae</taxon>
        <taxon>Peloderinae</taxon>
        <taxon>Caenorhabditis</taxon>
    </lineage>
</organism>
<protein>
    <recommendedName>
        <fullName evidence="3">Probable amino acid transporter skat-1</fullName>
    </recommendedName>
    <alternativeName>
        <fullName evidence="5">Protein suppressor of kat-1</fullName>
    </alternativeName>
</protein>
<sequence>MSEEEGRERAVTVEGDAESMNDGRALVQPPARSGDVITPTRAVLTLSKSMFNAGCFSLPYAWKLGGLWVSFVMSFVIAGLNWYGNHILVRASQHLAKKSDRSALDYGHFAKKVCDYSDIRFLRNNSKAVMYFVNVTILFYQLGMCSVAILFISDNLVNLVGDHLGGTRHQQMILMATVSLFFILLTNMFTEMRIVSFFALVSSVFFVIGAAVIMQYTVQQPNQWDKLPAATNFTGTITMIGMSMYAFEGQTMILPIENKLDNPAAFLAPFGVLSTTMIICTAFMTALGFFGYTGFGDSIAPTITTNVPKEGLYSTVNVFLMLQSLLGNSIAMYVVYDMFFNGFRRKFGARFPNVPKWLSDKGFRVFWVLVTYLMAVLIPKLEIMIPLVGVTSGALCALIFPPFFEMITFWTDWKGLLTYRQRMTKIFINLVVMAIGVFAIIAGVYTNIHAIIQSFSQPDP</sequence>
<gene>
    <name evidence="5" type="primary">skat-1</name>
    <name evidence="5" type="ORF">F59B2.2</name>
</gene>